<comment type="function">
    <text evidence="1">Involved in the modulation of the specificity of the ClpAP-mediated ATP-dependent protein degradation.</text>
</comment>
<comment type="subunit">
    <text evidence="1">Binds to the N-terminal domain of the chaperone ClpA.</text>
</comment>
<comment type="similarity">
    <text evidence="1">Belongs to the ClpS family.</text>
</comment>
<evidence type="ECO:0000255" key="1">
    <source>
        <dbReference type="HAMAP-Rule" id="MF_00302"/>
    </source>
</evidence>
<feature type="chain" id="PRO_0000215726" description="ATP-dependent Clp protease adapter protein ClpS">
    <location>
        <begin position="1"/>
        <end position="101"/>
    </location>
</feature>
<dbReference type="EMBL" id="AL123456">
    <property type="protein sequence ID" value="CCP44089.1"/>
    <property type="molecule type" value="Genomic_DNA"/>
</dbReference>
<dbReference type="PIR" id="G70770">
    <property type="entry name" value="G70770"/>
</dbReference>
<dbReference type="RefSeq" id="NP_215847.1">
    <property type="nucleotide sequence ID" value="NC_000962.3"/>
</dbReference>
<dbReference type="RefSeq" id="WP_003406906.1">
    <property type="nucleotide sequence ID" value="NZ_NVQJ01000031.1"/>
</dbReference>
<dbReference type="SMR" id="P9WPC1"/>
<dbReference type="STRING" id="83332.Rv1331"/>
<dbReference type="PaxDb" id="83332-Rv1331"/>
<dbReference type="GeneID" id="45425309"/>
<dbReference type="GeneID" id="886891"/>
<dbReference type="KEGG" id="mtu:Rv1331"/>
<dbReference type="KEGG" id="mtv:RVBD_1331"/>
<dbReference type="TubercuList" id="Rv1331"/>
<dbReference type="eggNOG" id="COG2127">
    <property type="taxonomic scope" value="Bacteria"/>
</dbReference>
<dbReference type="InParanoid" id="P9WPC1"/>
<dbReference type="OrthoDB" id="162238at2"/>
<dbReference type="PhylomeDB" id="P9WPC1"/>
<dbReference type="Proteomes" id="UP000001584">
    <property type="component" value="Chromosome"/>
</dbReference>
<dbReference type="GO" id="GO:0030163">
    <property type="term" value="P:protein catabolic process"/>
    <property type="evidence" value="ECO:0007669"/>
    <property type="project" value="InterPro"/>
</dbReference>
<dbReference type="GO" id="GO:0006508">
    <property type="term" value="P:proteolysis"/>
    <property type="evidence" value="ECO:0007669"/>
    <property type="project" value="UniProtKB-UniRule"/>
</dbReference>
<dbReference type="FunFam" id="3.30.1390.10:FF:000004">
    <property type="entry name" value="ATP-dependent Clp protease adapter protein ClpS"/>
    <property type="match status" value="1"/>
</dbReference>
<dbReference type="Gene3D" id="3.30.1390.10">
    <property type="match status" value="1"/>
</dbReference>
<dbReference type="HAMAP" id="MF_00302">
    <property type="entry name" value="ClpS"/>
    <property type="match status" value="1"/>
</dbReference>
<dbReference type="InterPro" id="IPR022935">
    <property type="entry name" value="ClpS"/>
</dbReference>
<dbReference type="InterPro" id="IPR003769">
    <property type="entry name" value="ClpS_core"/>
</dbReference>
<dbReference type="InterPro" id="IPR014719">
    <property type="entry name" value="Ribosomal_bL12_C/ClpS-like"/>
</dbReference>
<dbReference type="NCBIfam" id="NF000668">
    <property type="entry name" value="PRK00033.1-1"/>
    <property type="match status" value="1"/>
</dbReference>
<dbReference type="Pfam" id="PF02617">
    <property type="entry name" value="ClpS"/>
    <property type="match status" value="1"/>
</dbReference>
<dbReference type="SUPFAM" id="SSF54736">
    <property type="entry name" value="ClpS-like"/>
    <property type="match status" value="1"/>
</dbReference>
<name>CLPS_MYCTU</name>
<accession>P9WPC1</accession>
<accession>L0T929</accession>
<accession>P67647</accession>
<accession>Q10642</accession>
<reference key="1">
    <citation type="journal article" date="1998" name="Nature">
        <title>Deciphering the biology of Mycobacterium tuberculosis from the complete genome sequence.</title>
        <authorList>
            <person name="Cole S.T."/>
            <person name="Brosch R."/>
            <person name="Parkhill J."/>
            <person name="Garnier T."/>
            <person name="Churcher C.M."/>
            <person name="Harris D.E."/>
            <person name="Gordon S.V."/>
            <person name="Eiglmeier K."/>
            <person name="Gas S."/>
            <person name="Barry C.E. III"/>
            <person name="Tekaia F."/>
            <person name="Badcock K."/>
            <person name="Basham D."/>
            <person name="Brown D."/>
            <person name="Chillingworth T."/>
            <person name="Connor R."/>
            <person name="Davies R.M."/>
            <person name="Devlin K."/>
            <person name="Feltwell T."/>
            <person name="Gentles S."/>
            <person name="Hamlin N."/>
            <person name="Holroyd S."/>
            <person name="Hornsby T."/>
            <person name="Jagels K."/>
            <person name="Krogh A."/>
            <person name="McLean J."/>
            <person name="Moule S."/>
            <person name="Murphy L.D."/>
            <person name="Oliver S."/>
            <person name="Osborne J."/>
            <person name="Quail M.A."/>
            <person name="Rajandream M.A."/>
            <person name="Rogers J."/>
            <person name="Rutter S."/>
            <person name="Seeger K."/>
            <person name="Skelton S."/>
            <person name="Squares S."/>
            <person name="Squares R."/>
            <person name="Sulston J.E."/>
            <person name="Taylor K."/>
            <person name="Whitehead S."/>
            <person name="Barrell B.G."/>
        </authorList>
    </citation>
    <scope>NUCLEOTIDE SEQUENCE [LARGE SCALE GENOMIC DNA]</scope>
    <source>
        <strain>ATCC 25618 / H37Rv</strain>
    </source>
</reference>
<reference key="2">
    <citation type="journal article" date="2011" name="Mol. Cell. Proteomics">
        <title>Proteogenomic analysis of Mycobacterium tuberculosis by high resolution mass spectrometry.</title>
        <authorList>
            <person name="Kelkar D.S."/>
            <person name="Kumar D."/>
            <person name="Kumar P."/>
            <person name="Balakrishnan L."/>
            <person name="Muthusamy B."/>
            <person name="Yadav A.K."/>
            <person name="Shrivastava P."/>
            <person name="Marimuthu A."/>
            <person name="Anand S."/>
            <person name="Sundaram H."/>
            <person name="Kingsbury R."/>
            <person name="Harsha H.C."/>
            <person name="Nair B."/>
            <person name="Prasad T.S."/>
            <person name="Chauhan D.S."/>
            <person name="Katoch K."/>
            <person name="Katoch V.M."/>
            <person name="Kumar P."/>
            <person name="Chaerkady R."/>
            <person name="Ramachandran S."/>
            <person name="Dash D."/>
            <person name="Pandey A."/>
        </authorList>
    </citation>
    <scope>IDENTIFICATION BY MASS SPECTROMETRY [LARGE SCALE ANALYSIS]</scope>
    <source>
        <strain>ATCC 25618 / H37Rv</strain>
    </source>
</reference>
<organism>
    <name type="scientific">Mycobacterium tuberculosis (strain ATCC 25618 / H37Rv)</name>
    <dbReference type="NCBI Taxonomy" id="83332"/>
    <lineage>
        <taxon>Bacteria</taxon>
        <taxon>Bacillati</taxon>
        <taxon>Actinomycetota</taxon>
        <taxon>Actinomycetes</taxon>
        <taxon>Mycobacteriales</taxon>
        <taxon>Mycobacteriaceae</taxon>
        <taxon>Mycobacterium</taxon>
        <taxon>Mycobacterium tuberculosis complex</taxon>
    </lineage>
</organism>
<gene>
    <name evidence="1" type="primary">clpS</name>
    <name type="ordered locus">Rv1331</name>
    <name type="ORF">MTCY130.16</name>
</gene>
<proteinExistence type="evidence at protein level"/>
<protein>
    <recommendedName>
        <fullName evidence="1">ATP-dependent Clp protease adapter protein ClpS</fullName>
    </recommendedName>
</protein>
<sequence>MAVVSAPAKPGTTWQRESAPVDVTDRAWVTIVWDDPVNLMSYVTYVFQKLFGYSEPHATKLMLQVHNEGKAVVSAGSRESMEVDVSKLHAAGLWATMQQDR</sequence>
<keyword id="KW-1185">Reference proteome</keyword>